<dbReference type="EMBL" id="FO080698">
    <property type="protein sequence ID" value="CCD65924.1"/>
    <property type="molecule type" value="Genomic_DNA"/>
</dbReference>
<dbReference type="PIR" id="T25849">
    <property type="entry name" value="T25849"/>
</dbReference>
<dbReference type="RefSeq" id="NP_501439.2">
    <property type="nucleotide sequence ID" value="NM_069038.3"/>
</dbReference>
<dbReference type="SMR" id="P91409"/>
<dbReference type="BioGRID" id="42759">
    <property type="interactions" value="3"/>
</dbReference>
<dbReference type="DIP" id="DIP-26921N"/>
<dbReference type="FunCoup" id="P91409">
    <property type="interactions" value="21"/>
</dbReference>
<dbReference type="IntAct" id="P91409">
    <property type="interactions" value="2"/>
</dbReference>
<dbReference type="STRING" id="6239.T01B11.3.1"/>
<dbReference type="PaxDb" id="6239-T01B11.3"/>
<dbReference type="PeptideAtlas" id="P91409"/>
<dbReference type="EnsemblMetazoa" id="T01B11.3.1">
    <property type="protein sequence ID" value="T01B11.3.1"/>
    <property type="gene ID" value="WBGene00006374"/>
</dbReference>
<dbReference type="GeneID" id="177647"/>
<dbReference type="KEGG" id="cel:CELE_T01B11.3"/>
<dbReference type="UCSC" id="T01B11.3">
    <property type="organism name" value="c. elegans"/>
</dbReference>
<dbReference type="AGR" id="WB:WBGene00006374"/>
<dbReference type="CTD" id="177647"/>
<dbReference type="WormBase" id="T01B11.3">
    <property type="protein sequence ID" value="CE43759"/>
    <property type="gene ID" value="WBGene00006374"/>
    <property type="gene designation" value="syx-4"/>
</dbReference>
<dbReference type="eggNOG" id="KOG0810">
    <property type="taxonomic scope" value="Eukaryota"/>
</dbReference>
<dbReference type="GeneTree" id="ENSGT01000000214440"/>
<dbReference type="HOGENOM" id="CLU_042423_4_0_1"/>
<dbReference type="InParanoid" id="P91409"/>
<dbReference type="OrthoDB" id="249087at2759"/>
<dbReference type="PhylomeDB" id="P91409"/>
<dbReference type="PRO" id="PR:P91409"/>
<dbReference type="Proteomes" id="UP000001940">
    <property type="component" value="Chromosome IV"/>
</dbReference>
<dbReference type="Bgee" id="WBGene00006374">
    <property type="expression patterns" value="Expressed in germ line (C elegans) and 3 other cell types or tissues"/>
</dbReference>
<dbReference type="GO" id="GO:0032154">
    <property type="term" value="C:cleavage furrow"/>
    <property type="evidence" value="ECO:0000314"/>
    <property type="project" value="WormBase"/>
</dbReference>
<dbReference type="GO" id="GO:0060473">
    <property type="term" value="C:cortical granule"/>
    <property type="evidence" value="ECO:0000314"/>
    <property type="project" value="WormBase"/>
</dbReference>
<dbReference type="GO" id="GO:0012505">
    <property type="term" value="C:endomembrane system"/>
    <property type="evidence" value="ECO:0000318"/>
    <property type="project" value="GO_Central"/>
</dbReference>
<dbReference type="GO" id="GO:0048471">
    <property type="term" value="C:perinuclear region of cytoplasm"/>
    <property type="evidence" value="ECO:0000314"/>
    <property type="project" value="WormBase"/>
</dbReference>
<dbReference type="GO" id="GO:0005886">
    <property type="term" value="C:plasma membrane"/>
    <property type="evidence" value="ECO:0000314"/>
    <property type="project" value="WormBase"/>
</dbReference>
<dbReference type="GO" id="GO:0098793">
    <property type="term" value="C:presynapse"/>
    <property type="evidence" value="ECO:0007669"/>
    <property type="project" value="GOC"/>
</dbReference>
<dbReference type="GO" id="GO:0031201">
    <property type="term" value="C:SNARE complex"/>
    <property type="evidence" value="ECO:0000318"/>
    <property type="project" value="GO_Central"/>
</dbReference>
<dbReference type="GO" id="GO:0005484">
    <property type="term" value="F:SNAP receptor activity"/>
    <property type="evidence" value="ECO:0000318"/>
    <property type="project" value="GO_Central"/>
</dbReference>
<dbReference type="GO" id="GO:0000149">
    <property type="term" value="F:SNARE binding"/>
    <property type="evidence" value="ECO:0000318"/>
    <property type="project" value="GO_Central"/>
</dbReference>
<dbReference type="GO" id="GO:0060471">
    <property type="term" value="P:cortical granule exocytosis"/>
    <property type="evidence" value="ECO:0000315"/>
    <property type="project" value="WormBase"/>
</dbReference>
<dbReference type="GO" id="GO:0006887">
    <property type="term" value="P:exocytosis"/>
    <property type="evidence" value="ECO:0000318"/>
    <property type="project" value="GO_Central"/>
</dbReference>
<dbReference type="GO" id="GO:0006886">
    <property type="term" value="P:intracellular protein transport"/>
    <property type="evidence" value="ECO:0000318"/>
    <property type="project" value="GO_Central"/>
</dbReference>
<dbReference type="GO" id="GO:0032467">
    <property type="term" value="P:positive regulation of cytokinesis"/>
    <property type="evidence" value="ECO:0000315"/>
    <property type="project" value="WormBase"/>
</dbReference>
<dbReference type="GO" id="GO:0017157">
    <property type="term" value="P:regulation of exocytosis"/>
    <property type="evidence" value="ECO:0000315"/>
    <property type="project" value="UniProtKB"/>
</dbReference>
<dbReference type="GO" id="GO:0016081">
    <property type="term" value="P:synaptic vesicle docking"/>
    <property type="evidence" value="ECO:0000250"/>
    <property type="project" value="UniProtKB"/>
</dbReference>
<dbReference type="GO" id="GO:0048278">
    <property type="term" value="P:vesicle docking"/>
    <property type="evidence" value="ECO:0000318"/>
    <property type="project" value="GO_Central"/>
</dbReference>
<dbReference type="GO" id="GO:0006906">
    <property type="term" value="P:vesicle fusion"/>
    <property type="evidence" value="ECO:0000318"/>
    <property type="project" value="GO_Central"/>
</dbReference>
<dbReference type="CDD" id="cd15848">
    <property type="entry name" value="SNARE_syntaxin1-like"/>
    <property type="match status" value="1"/>
</dbReference>
<dbReference type="FunFam" id="1.20.58.70:FF:000027">
    <property type="entry name" value="Putative syntaxin-3"/>
    <property type="match status" value="1"/>
</dbReference>
<dbReference type="Gene3D" id="1.20.5.110">
    <property type="match status" value="1"/>
</dbReference>
<dbReference type="Gene3D" id="1.20.58.70">
    <property type="match status" value="1"/>
</dbReference>
<dbReference type="InterPro" id="IPR010989">
    <property type="entry name" value="SNARE"/>
</dbReference>
<dbReference type="InterPro" id="IPR045242">
    <property type="entry name" value="Syntaxin"/>
</dbReference>
<dbReference type="InterPro" id="IPR006012">
    <property type="entry name" value="Syntaxin/epimorphin_CS"/>
</dbReference>
<dbReference type="InterPro" id="IPR006011">
    <property type="entry name" value="Syntaxin_N"/>
</dbReference>
<dbReference type="InterPro" id="IPR000727">
    <property type="entry name" value="T_SNARE_dom"/>
</dbReference>
<dbReference type="PANTHER" id="PTHR19957">
    <property type="entry name" value="SYNTAXIN"/>
    <property type="match status" value="1"/>
</dbReference>
<dbReference type="PANTHER" id="PTHR19957:SF310">
    <property type="entry name" value="SYNTAXIN-4-RELATED"/>
    <property type="match status" value="1"/>
</dbReference>
<dbReference type="Pfam" id="PF05739">
    <property type="entry name" value="SNARE"/>
    <property type="match status" value="1"/>
</dbReference>
<dbReference type="Pfam" id="PF00804">
    <property type="entry name" value="Syntaxin"/>
    <property type="match status" value="1"/>
</dbReference>
<dbReference type="SMART" id="SM00503">
    <property type="entry name" value="SynN"/>
    <property type="match status" value="1"/>
</dbReference>
<dbReference type="SMART" id="SM00397">
    <property type="entry name" value="t_SNARE"/>
    <property type="match status" value="1"/>
</dbReference>
<dbReference type="SUPFAM" id="SSF47661">
    <property type="entry name" value="t-snare proteins"/>
    <property type="match status" value="1"/>
</dbReference>
<dbReference type="PROSITE" id="PS00914">
    <property type="entry name" value="SYNTAXIN"/>
    <property type="match status" value="1"/>
</dbReference>
<dbReference type="PROSITE" id="PS50192">
    <property type="entry name" value="T_SNARE"/>
    <property type="match status" value="1"/>
</dbReference>
<organism>
    <name type="scientific">Caenorhabditis elegans</name>
    <dbReference type="NCBI Taxonomy" id="6239"/>
    <lineage>
        <taxon>Eukaryota</taxon>
        <taxon>Metazoa</taxon>
        <taxon>Ecdysozoa</taxon>
        <taxon>Nematoda</taxon>
        <taxon>Chromadorea</taxon>
        <taxon>Rhabditida</taxon>
        <taxon>Rhabditina</taxon>
        <taxon>Rhabditomorpha</taxon>
        <taxon>Rhabditoidea</taxon>
        <taxon>Rhabditidae</taxon>
        <taxon>Peloderinae</taxon>
        <taxon>Caenorhabditis</taxon>
    </lineage>
</organism>
<accession>P91409</accession>
<reference key="1">
    <citation type="journal article" date="1998" name="Science">
        <title>Genome sequence of the nematode C. elegans: a platform for investigating biology.</title>
        <authorList>
            <consortium name="The C. elegans sequencing consortium"/>
        </authorList>
    </citation>
    <scope>NUCLEOTIDE SEQUENCE [LARGE SCALE GENOMIC DNA]</scope>
    <source>
        <strain>Bristol N2</strain>
    </source>
</reference>
<protein>
    <recommendedName>
        <fullName>Putative syntaxin-4</fullName>
    </recommendedName>
</protein>
<evidence type="ECO:0000250" key="1"/>
<evidence type="ECO:0000255" key="2"/>
<evidence type="ECO:0000255" key="3">
    <source>
        <dbReference type="PROSITE-ProRule" id="PRU00202"/>
    </source>
</evidence>
<evidence type="ECO:0000305" key="4"/>
<proteinExistence type="evidence at protein level"/>
<feature type="chain" id="PRO_0000210242" description="Putative syntaxin-4">
    <location>
        <begin position="1"/>
        <end position="287"/>
    </location>
</feature>
<feature type="topological domain" description="Cytoplasmic" evidence="2">
    <location>
        <begin position="1"/>
        <end position="262"/>
    </location>
</feature>
<feature type="transmembrane region" description="Helical; Anchor for type IV membrane protein" evidence="2">
    <location>
        <begin position="263"/>
        <end position="283"/>
    </location>
</feature>
<feature type="topological domain" description="Extracellular" evidence="2">
    <location>
        <begin position="284"/>
        <end position="287"/>
    </location>
</feature>
<feature type="domain" description="t-SNARE coiled-coil homology" evidence="3">
    <location>
        <begin position="184"/>
        <end position="246"/>
    </location>
</feature>
<feature type="coiled-coil region" evidence="2">
    <location>
        <begin position="65"/>
        <end position="97"/>
    </location>
</feature>
<keyword id="KW-0175">Coiled coil</keyword>
<keyword id="KW-0472">Membrane</keyword>
<keyword id="KW-0532">Neurotransmitter transport</keyword>
<keyword id="KW-1185">Reference proteome</keyword>
<keyword id="KW-0812">Transmembrane</keyword>
<keyword id="KW-1133">Transmembrane helix</keyword>
<keyword id="KW-0813">Transport</keyword>
<name>STX4_CAEEL</name>
<comment type="function">
    <text evidence="1">Potentially involved in docking of synaptic vesicles at presynaptic active zones.</text>
</comment>
<comment type="interaction">
    <interactant intactId="EBI-326499">
        <id>P91409</id>
    </interactant>
    <interactant intactId="EBI-313095">
        <id>O62305</id>
        <label>unc-43</label>
    </interactant>
    <organismsDiffer>false</organismsDiffer>
    <experiments>3</experiments>
</comment>
<comment type="subcellular location">
    <subcellularLocation>
        <location evidence="4">Membrane</location>
        <topology evidence="4">Single-pass type IV membrane protein</topology>
    </subcellularLocation>
</comment>
<comment type="similarity">
    <text evidence="4">Belongs to the syntaxin family.</text>
</comment>
<sequence>MHQISGINAASPEKNNSKLADVSLQQFLANVDEIRHVLTTLSADRHAIYMEQVESLAAGCSDTAKCRKLNDHVDKFIAQARGIRRRLADASEELVQYPESRVGSGRARHEQIQMLIVSLEGIMSQFADDQASYKAEAAKKIAAYLRKQNIEVTDSEIDGAIENGSLFQLTRNINLGVAQKKALFDDMKNRATDIMILEKQIREVEELFVDMQLLVQSQGETVDRIETSVIRAEEYAEQAQQNVRQAVVLRRKNRKWKIVTCIALIVLLLVVVYLLSHFLGAIIPGWK</sequence>
<gene>
    <name type="primary">syx-4</name>
    <name type="synonym">syn-4</name>
    <name type="ORF">T01B11.3</name>
</gene>